<proteinExistence type="predicted"/>
<gene>
    <name type="ordered locus">MG447</name>
</gene>
<sequence length="547" mass="62053">MNSKRDRFEKQLLIKNVFESKQLFLTILRFTVPTFFFALFSAAYVFIDQIMVIKFVPRSELNPDSIFTDQSLIDEFKNSAFYKSDSFLSSGLNIKQFIKTVLNISQPLIVLLNAINIFIPLGTGVIFSKAIGRNDQNKIQEAWNTGLISTTVFGLITQFLVLSFAKEWLHYNLDQSSFEQNFQANSFQQFFNKKAIDVASEYVYILIGLNIIPMLSRLFFYLAQSEGRQLFIAIVPPIANLINILIVFLLVRYSSLGVIGSAVAGILGYLINFLAYIIYLIYLNKRNLTYLTFKTIKLNKIDFNLLVVVSLIGMASFFRNGSLSIVTTFYESFLVNLTKATTDKNDVFYLTLLTGPIAISNLASAAIFGLLQGVRTVSSYKFGQKKYDEIKKINIYTVIICISFGSLIYLLTAVAFGKQILSSFFDVSDQNLDLANYFSLIVQAQVFFVATGANSQQYFQNTNRVLYSWIVSLTHGLFVFIPLLFIFQAITLQTNNIEVFIWLLTANAALAGLINIAFGQIHTNLFMDKYFANPPQNKLVKFIEKYS</sequence>
<evidence type="ECO:0000255" key="1"/>
<evidence type="ECO:0000305" key="2"/>
<keyword id="KW-1003">Cell membrane</keyword>
<keyword id="KW-0472">Membrane</keyword>
<keyword id="KW-1185">Reference proteome</keyword>
<keyword id="KW-0812">Transmembrane</keyword>
<keyword id="KW-1133">Transmembrane helix</keyword>
<accession>P47685</accession>
<reference key="1">
    <citation type="journal article" date="1995" name="Science">
        <title>The minimal gene complement of Mycoplasma genitalium.</title>
        <authorList>
            <person name="Fraser C.M."/>
            <person name="Gocayne J.D."/>
            <person name="White O."/>
            <person name="Adams M.D."/>
            <person name="Clayton R.A."/>
            <person name="Fleischmann R.D."/>
            <person name="Bult C.J."/>
            <person name="Kerlavage A.R."/>
            <person name="Sutton G.G."/>
            <person name="Kelley J.M."/>
            <person name="Fritchman J.L."/>
            <person name="Weidman J.F."/>
            <person name="Small K.V."/>
            <person name="Sandusky M."/>
            <person name="Fuhrmann J.L."/>
            <person name="Nguyen D.T."/>
            <person name="Utterback T.R."/>
            <person name="Saudek D.M."/>
            <person name="Phillips C.A."/>
            <person name="Merrick J.M."/>
            <person name="Tomb J.-F."/>
            <person name="Dougherty B.A."/>
            <person name="Bott K.F."/>
            <person name="Hu P.-C."/>
            <person name="Lucier T.S."/>
            <person name="Peterson S.N."/>
            <person name="Smith H.O."/>
            <person name="Hutchison C.A. III"/>
            <person name="Venter J.C."/>
        </authorList>
    </citation>
    <scope>NUCLEOTIDE SEQUENCE [LARGE SCALE GENOMIC DNA]</scope>
    <source>
        <strain>ATCC 33530 / DSM 19775 / NCTC 10195 / G37</strain>
    </source>
</reference>
<reference key="2">
    <citation type="journal article" date="1993" name="J. Bacteriol.">
        <title>A survey of the Mycoplasma genitalium genome by using random sequencing.</title>
        <authorList>
            <person name="Peterson S.N."/>
            <person name="Hu P.-C."/>
            <person name="Bott K.F."/>
            <person name="Hutchison C.A. III"/>
        </authorList>
    </citation>
    <scope>NUCLEOTIDE SEQUENCE [GENOMIC DNA] OF 107-215</scope>
    <source>
        <strain>ATCC 33530 / DSM 19775 / NCTC 10195 / G37</strain>
    </source>
</reference>
<feature type="chain" id="PRO_0000210618" description="Uncharacterized protein MG447">
    <location>
        <begin position="1"/>
        <end position="547"/>
    </location>
</feature>
<feature type="transmembrane region" description="Helical" evidence="1">
    <location>
        <begin position="33"/>
        <end position="53"/>
    </location>
</feature>
<feature type="transmembrane region" description="Helical" evidence="1">
    <location>
        <begin position="107"/>
        <end position="127"/>
    </location>
</feature>
<feature type="transmembrane region" description="Helical" evidence="1">
    <location>
        <begin position="145"/>
        <end position="165"/>
    </location>
</feature>
<feature type="transmembrane region" description="Helical" evidence="1">
    <location>
        <begin position="203"/>
        <end position="223"/>
    </location>
</feature>
<feature type="transmembrane region" description="Helical" evidence="1">
    <location>
        <begin position="231"/>
        <end position="251"/>
    </location>
</feature>
<feature type="transmembrane region" description="Helical" evidence="1">
    <location>
        <begin position="263"/>
        <end position="283"/>
    </location>
</feature>
<feature type="transmembrane region" description="Helical" evidence="1">
    <location>
        <begin position="298"/>
        <end position="318"/>
    </location>
</feature>
<feature type="transmembrane region" description="Helical" evidence="1">
    <location>
        <begin position="351"/>
        <end position="371"/>
    </location>
</feature>
<feature type="transmembrane region" description="Helical" evidence="1">
    <location>
        <begin position="397"/>
        <end position="417"/>
    </location>
</feature>
<feature type="transmembrane region" description="Helical" evidence="1">
    <location>
        <begin position="432"/>
        <end position="452"/>
    </location>
</feature>
<feature type="transmembrane region" description="Helical" evidence="1">
    <location>
        <begin position="470"/>
        <end position="490"/>
    </location>
</feature>
<feature type="transmembrane region" description="Helical" evidence="1">
    <location>
        <begin position="499"/>
        <end position="519"/>
    </location>
</feature>
<organism>
    <name type="scientific">Mycoplasma genitalium (strain ATCC 33530 / DSM 19775 / NCTC 10195 / G37)</name>
    <name type="common">Mycoplasmoides genitalium</name>
    <dbReference type="NCBI Taxonomy" id="243273"/>
    <lineage>
        <taxon>Bacteria</taxon>
        <taxon>Bacillati</taxon>
        <taxon>Mycoplasmatota</taxon>
        <taxon>Mycoplasmoidales</taxon>
        <taxon>Mycoplasmoidaceae</taxon>
        <taxon>Mycoplasmoides</taxon>
    </lineage>
</organism>
<comment type="subcellular location">
    <subcellularLocation>
        <location evidence="2">Cell membrane</location>
        <topology evidence="2">Multi-pass membrane protein</topology>
    </subcellularLocation>
</comment>
<dbReference type="EMBL" id="L43967">
    <property type="protein sequence ID" value="AAC72467.1"/>
    <property type="molecule type" value="Genomic_DNA"/>
</dbReference>
<dbReference type="EMBL" id="U01788">
    <property type="protein sequence ID" value="AAD10610.1"/>
    <property type="molecule type" value="Genomic_DNA"/>
</dbReference>
<dbReference type="PIR" id="D64249">
    <property type="entry name" value="D64249"/>
</dbReference>
<dbReference type="RefSeq" id="WP_010869486.1">
    <property type="nucleotide sequence ID" value="NC_000908.2"/>
</dbReference>
<dbReference type="SMR" id="P47685"/>
<dbReference type="STRING" id="243273.MG_447"/>
<dbReference type="GeneID" id="88282627"/>
<dbReference type="KEGG" id="mge:MG_447"/>
<dbReference type="eggNOG" id="COG0534">
    <property type="taxonomic scope" value="Bacteria"/>
</dbReference>
<dbReference type="HOGENOM" id="CLU_468356_0_0_14"/>
<dbReference type="InParanoid" id="P47685"/>
<dbReference type="OrthoDB" id="396185at2"/>
<dbReference type="BioCyc" id="MGEN243273:G1GJ2-540-MONOMER"/>
<dbReference type="Proteomes" id="UP000000807">
    <property type="component" value="Chromosome"/>
</dbReference>
<dbReference type="GO" id="GO:0005886">
    <property type="term" value="C:plasma membrane"/>
    <property type="evidence" value="ECO:0007669"/>
    <property type="project" value="UniProtKB-SubCell"/>
</dbReference>
<dbReference type="GO" id="GO:0015297">
    <property type="term" value="F:antiporter activity"/>
    <property type="evidence" value="ECO:0007669"/>
    <property type="project" value="InterPro"/>
</dbReference>
<dbReference type="GO" id="GO:0042910">
    <property type="term" value="F:xenobiotic transmembrane transporter activity"/>
    <property type="evidence" value="ECO:0007669"/>
    <property type="project" value="InterPro"/>
</dbReference>
<dbReference type="CDD" id="cd12082">
    <property type="entry name" value="MATE_like"/>
    <property type="match status" value="1"/>
</dbReference>
<dbReference type="InterPro" id="IPR002528">
    <property type="entry name" value="MATE_fam"/>
</dbReference>
<dbReference type="InterPro" id="IPR051327">
    <property type="entry name" value="MATE_MepA_subfamily"/>
</dbReference>
<dbReference type="PANTHER" id="PTHR43823:SF3">
    <property type="entry name" value="MULTIDRUG EXPORT PROTEIN MEPA"/>
    <property type="match status" value="1"/>
</dbReference>
<dbReference type="PANTHER" id="PTHR43823">
    <property type="entry name" value="SPORULATION PROTEIN YKVU"/>
    <property type="match status" value="1"/>
</dbReference>
<dbReference type="Pfam" id="PF01554">
    <property type="entry name" value="MatE"/>
    <property type="match status" value="1"/>
</dbReference>
<name>Y447_MYCGE</name>
<protein>
    <recommendedName>
        <fullName>Uncharacterized protein MG447</fullName>
    </recommendedName>
</protein>